<dbReference type="EMBL" id="X59763">
    <property type="protein sequence ID" value="CAA42435.1"/>
    <property type="molecule type" value="Genomic_DNA"/>
</dbReference>
<dbReference type="SMR" id="P29733"/>
<dbReference type="GO" id="GO:0030089">
    <property type="term" value="C:phycobilisome"/>
    <property type="evidence" value="ECO:0007669"/>
    <property type="project" value="UniProtKB-KW"/>
</dbReference>
<dbReference type="GO" id="GO:0031676">
    <property type="term" value="C:plasma membrane-derived thylakoid membrane"/>
    <property type="evidence" value="ECO:0007669"/>
    <property type="project" value="UniProtKB-SubCell"/>
</dbReference>
<dbReference type="GO" id="GO:0015979">
    <property type="term" value="P:photosynthesis"/>
    <property type="evidence" value="ECO:0007669"/>
    <property type="project" value="UniProtKB-KW"/>
</dbReference>
<dbReference type="Gene3D" id="1.10.3130.20">
    <property type="entry name" value="Phycobilisome linker domain"/>
    <property type="match status" value="1"/>
</dbReference>
<dbReference type="InterPro" id="IPR001297">
    <property type="entry name" value="PBS_linker_dom"/>
</dbReference>
<dbReference type="InterPro" id="IPR038255">
    <property type="entry name" value="PBS_linker_sf"/>
</dbReference>
<dbReference type="InterPro" id="IPR016470">
    <property type="entry name" value="Phycobilisome"/>
</dbReference>
<dbReference type="PANTHER" id="PTHR34011">
    <property type="entry name" value="PHYCOBILISOME 32.1 KDA LINKER POLYPEPTIDE, PHYCOCYANIN-ASSOCIATED, ROD 2-RELATED"/>
    <property type="match status" value="1"/>
</dbReference>
<dbReference type="Pfam" id="PF00427">
    <property type="entry name" value="PBS_linker_poly"/>
    <property type="match status" value="1"/>
</dbReference>
<dbReference type="PIRSF" id="PIRSF005898">
    <property type="entry name" value="Phycobilisome_CpeC/CpcI"/>
    <property type="match status" value="1"/>
</dbReference>
<dbReference type="PROSITE" id="PS51445">
    <property type="entry name" value="PBS_LINKER"/>
    <property type="match status" value="1"/>
</dbReference>
<proteinExistence type="inferred from homology"/>
<organism>
    <name type="scientific">Mastigocladus laminosus</name>
    <name type="common">Fischerella sp.</name>
    <dbReference type="NCBI Taxonomy" id="83541"/>
    <lineage>
        <taxon>Bacteria</taxon>
        <taxon>Bacillati</taxon>
        <taxon>Cyanobacteriota</taxon>
        <taxon>Cyanophyceae</taxon>
        <taxon>Nostocales</taxon>
        <taxon>Hapalosiphonaceae</taxon>
        <taxon>Mastigocladus</taxon>
    </lineage>
</organism>
<sequence length="254" mass="29624">MALPLLEYKLSSQNHRVKSFGVADQNEDTPYIYRLEDVSSFTDIQNIIWAAYRQVFSEHEILRFNRQKHLESQLKSGLITVRDFIRGLAKSEAFYRLVVSVNNNYRLVDVVLKRLLGRSAYNKEEEIAWSIVIGTKGFDGFVDAIVDSDEYTQAFGDNTVPYQRKRLVDRPHNLVTPRYGEDFQETAGTVKTDWRFTLQNFYSRKFQERQLREGDPRKYTDMAAAIAPKGNYAQNIRAADLDYLNLVPSRTRRF</sequence>
<keyword id="KW-0042">Antenna complex</keyword>
<keyword id="KW-0472">Membrane</keyword>
<keyword id="KW-0602">Photosynthesis</keyword>
<keyword id="KW-0605">Phycobilisome</keyword>
<keyword id="KW-0793">Thylakoid</keyword>
<protein>
    <recommendedName>
        <fullName>Phycobilisome rod-core linker polypeptide CpcG3</fullName>
    </recommendedName>
    <alternativeName>
        <fullName>L-RC 29.6</fullName>
    </alternativeName>
</protein>
<gene>
    <name type="primary">cpcG3</name>
</gene>
<evidence type="ECO:0000250" key="1"/>
<evidence type="ECO:0000255" key="2">
    <source>
        <dbReference type="PROSITE-ProRule" id="PRU00775"/>
    </source>
</evidence>
<accession>P29733</accession>
<name>PYG3_MASLA</name>
<reference key="1">
    <citation type="journal article" date="1992" name="Eur. J. Biochem.">
        <title>Structure of the genes encoding the rod-core linker polypeptides of Mastigocladus laminosus phycobilisomes and functional aspects of the phycobiliprotein/linker-polypeptide interactions.</title>
        <authorList>
            <person name="Glauser M."/>
            <person name="Stirewalt V.L."/>
            <person name="Bryant D.A."/>
            <person name="Sidler W."/>
            <person name="Zuber H."/>
        </authorList>
    </citation>
    <scope>NUCLEOTIDE SEQUENCE [GENOMIC DNA]</scope>
    <source>
        <strain>PCC 7603</strain>
    </source>
</reference>
<feature type="initiator methionine" description="Removed" evidence="1">
    <location>
        <position position="1"/>
    </location>
</feature>
<feature type="chain" id="PRO_0000199252" description="Phycobilisome rod-core linker polypeptide CpcG3">
    <location>
        <begin position="2"/>
        <end position="254"/>
    </location>
</feature>
<feature type="domain" description="PBS-linker" evidence="2">
    <location>
        <begin position="11"/>
        <end position="191"/>
    </location>
</feature>
<comment type="function">
    <text evidence="1">Rod-core linker protein required for attachment of phycocyanin to allophycocyanin in cores of phycobilisomes.</text>
</comment>
<comment type="function">
    <text evidence="1">Linker polypeptides determine the state of aggregation and the location of the disk-shaped phycobiliprotein units within the phycobilisome and modulate their spectroscopic properties in order to mediate a directed and optimal energy transfer.</text>
</comment>
<comment type="subunit">
    <text evidence="1">The phycobilisome is a hemidiscoidal structure that is composed of two distinct substructures: a core complex and a number of rods radiating from the core.</text>
</comment>
<comment type="subcellular location">
    <subcellularLocation>
        <location evidence="1">Cellular thylakoid membrane</location>
        <topology evidence="1">Peripheral membrane protein</topology>
        <orientation evidence="1">Cytoplasmic side</orientation>
    </subcellularLocation>
</comment>
<comment type="similarity">
    <text evidence="2">Belongs to the phycobilisome linker protein family.</text>
</comment>